<feature type="chain" id="PRO_0000414369" description="Cell division protein FtsB">
    <location>
        <begin position="1"/>
        <end position="89"/>
    </location>
</feature>
<feature type="topological domain" description="Cytoplasmic" evidence="1">
    <location>
        <begin position="1"/>
        <end position="3"/>
    </location>
</feature>
<feature type="transmembrane region" description="Helical" evidence="1">
    <location>
        <begin position="4"/>
        <end position="21"/>
    </location>
</feature>
<feature type="topological domain" description="Periplasmic" evidence="1">
    <location>
        <begin position="22"/>
        <end position="89"/>
    </location>
</feature>
<feature type="coiled-coil region" evidence="1">
    <location>
        <begin position="29"/>
        <end position="62"/>
    </location>
</feature>
<proteinExistence type="inferred from homology"/>
<evidence type="ECO:0000255" key="1">
    <source>
        <dbReference type="HAMAP-Rule" id="MF_00599"/>
    </source>
</evidence>
<reference key="1">
    <citation type="journal article" date="2003" name="Proc. Natl. Acad. Sci. U.S.A.">
        <title>Complete genome sequence of the Q-fever pathogen, Coxiella burnetii.</title>
        <authorList>
            <person name="Seshadri R."/>
            <person name="Paulsen I.T."/>
            <person name="Eisen J.A."/>
            <person name="Read T.D."/>
            <person name="Nelson K.E."/>
            <person name="Nelson W.C."/>
            <person name="Ward N.L."/>
            <person name="Tettelin H."/>
            <person name="Davidsen T.M."/>
            <person name="Beanan M.J."/>
            <person name="DeBoy R.T."/>
            <person name="Daugherty S.C."/>
            <person name="Brinkac L.M."/>
            <person name="Madupu R."/>
            <person name="Dodson R.J."/>
            <person name="Khouri H.M."/>
            <person name="Lee K.H."/>
            <person name="Carty H.A."/>
            <person name="Scanlan D."/>
            <person name="Heinzen R.A."/>
            <person name="Thompson H.A."/>
            <person name="Samuel J.E."/>
            <person name="Fraser C.M."/>
            <person name="Heidelberg J.F."/>
        </authorList>
    </citation>
    <scope>NUCLEOTIDE SEQUENCE [LARGE SCALE GENOMIC DNA]</scope>
    <source>
        <strain>RSA 493 / Nine Mile phase I</strain>
    </source>
</reference>
<name>FTSB_COXBU</name>
<dbReference type="EMBL" id="AE016828">
    <property type="protein sequence ID" value="AAO91169.1"/>
    <property type="molecule type" value="Genomic_DNA"/>
</dbReference>
<dbReference type="RefSeq" id="NP_820655.1">
    <property type="nucleotide sequence ID" value="NC_002971.4"/>
</dbReference>
<dbReference type="RefSeq" id="WP_005770584.1">
    <property type="nucleotide sequence ID" value="NZ_CDBG01000001.1"/>
</dbReference>
<dbReference type="SMR" id="Q83B45"/>
<dbReference type="STRING" id="227377.CBU_1673"/>
<dbReference type="EnsemblBacteria" id="AAO91169">
    <property type="protein sequence ID" value="AAO91169"/>
    <property type="gene ID" value="CBU_1673"/>
</dbReference>
<dbReference type="GeneID" id="1209584"/>
<dbReference type="KEGG" id="cbu:CBU_1673"/>
<dbReference type="PATRIC" id="fig|227377.7.peg.1662"/>
<dbReference type="eggNOG" id="COG2919">
    <property type="taxonomic scope" value="Bacteria"/>
</dbReference>
<dbReference type="HOGENOM" id="CLU_134863_5_2_6"/>
<dbReference type="OrthoDB" id="7061211at2"/>
<dbReference type="Proteomes" id="UP000002671">
    <property type="component" value="Chromosome"/>
</dbReference>
<dbReference type="GO" id="GO:0032153">
    <property type="term" value="C:cell division site"/>
    <property type="evidence" value="ECO:0007669"/>
    <property type="project" value="UniProtKB-UniRule"/>
</dbReference>
<dbReference type="GO" id="GO:0030428">
    <property type="term" value="C:cell septum"/>
    <property type="evidence" value="ECO:0000318"/>
    <property type="project" value="GO_Central"/>
</dbReference>
<dbReference type="GO" id="GO:0005886">
    <property type="term" value="C:plasma membrane"/>
    <property type="evidence" value="ECO:0007669"/>
    <property type="project" value="UniProtKB-SubCell"/>
</dbReference>
<dbReference type="GO" id="GO:0043093">
    <property type="term" value="P:FtsZ-dependent cytokinesis"/>
    <property type="evidence" value="ECO:0000318"/>
    <property type="project" value="GO_Central"/>
</dbReference>
<dbReference type="HAMAP" id="MF_00599">
    <property type="entry name" value="FtsB"/>
    <property type="match status" value="1"/>
</dbReference>
<dbReference type="InterPro" id="IPR023081">
    <property type="entry name" value="Cell_div_FtsB"/>
</dbReference>
<dbReference type="InterPro" id="IPR007060">
    <property type="entry name" value="FtsL/DivIC"/>
</dbReference>
<dbReference type="NCBIfam" id="NF002058">
    <property type="entry name" value="PRK00888.1"/>
    <property type="match status" value="1"/>
</dbReference>
<dbReference type="PANTHER" id="PTHR37485">
    <property type="entry name" value="CELL DIVISION PROTEIN FTSB"/>
    <property type="match status" value="1"/>
</dbReference>
<dbReference type="PANTHER" id="PTHR37485:SF1">
    <property type="entry name" value="CELL DIVISION PROTEIN FTSB"/>
    <property type="match status" value="1"/>
</dbReference>
<dbReference type="Pfam" id="PF04977">
    <property type="entry name" value="DivIC"/>
    <property type="match status" value="1"/>
</dbReference>
<comment type="function">
    <text evidence="1">Essential cell division protein. May link together the upstream cell division proteins, which are predominantly cytoplasmic, with the downstream cell division proteins, which are predominantly periplasmic.</text>
</comment>
<comment type="subunit">
    <text evidence="1">Part of a complex composed of FtsB, FtsL and FtsQ.</text>
</comment>
<comment type="subcellular location">
    <subcellularLocation>
        <location evidence="1">Cell inner membrane</location>
        <topology evidence="1">Single-pass type II membrane protein</topology>
    </subcellularLocation>
    <text evidence="1">Localizes to the division septum.</text>
</comment>
<comment type="similarity">
    <text evidence="1">Belongs to the FtsB family.</text>
</comment>
<organism>
    <name type="scientific">Coxiella burnetii (strain RSA 493 / Nine Mile phase I)</name>
    <dbReference type="NCBI Taxonomy" id="227377"/>
    <lineage>
        <taxon>Bacteria</taxon>
        <taxon>Pseudomonadati</taxon>
        <taxon>Pseudomonadota</taxon>
        <taxon>Gammaproteobacteria</taxon>
        <taxon>Legionellales</taxon>
        <taxon>Coxiellaceae</taxon>
        <taxon>Coxiella</taxon>
    </lineage>
</organism>
<protein>
    <recommendedName>
        <fullName evidence="1">Cell division protein FtsB</fullName>
    </recommendedName>
</protein>
<keyword id="KW-0131">Cell cycle</keyword>
<keyword id="KW-0132">Cell division</keyword>
<keyword id="KW-0997">Cell inner membrane</keyword>
<keyword id="KW-1003">Cell membrane</keyword>
<keyword id="KW-0175">Coiled coil</keyword>
<keyword id="KW-0472">Membrane</keyword>
<keyword id="KW-1185">Reference proteome</keyword>
<keyword id="KW-0812">Transmembrane</keyword>
<keyword id="KW-1133">Transmembrane helix</keyword>
<sequence length="89" mass="10231">MRPIIAILIALFILLQYQLWFAAGGIVSVHHLNENINHQIMENQKLKDRNTALLADIDDLKHGAEAIEEHARNDLGMIKKNEVFYQIVK</sequence>
<accession>Q83B45</accession>
<gene>
    <name evidence="1" type="primary">ftsB</name>
    <name type="ordered locus">CBU_1673</name>
</gene>